<comment type="function">
    <text evidence="2">Pore-forming subunit of the voltage-gated potassium (Kv) channel involved in the regulation of sensory cells excitability in the cochlea. KCNQ4/Kv7.4 channel is composed of 4 pore-forming subunits assembled as tetramers. Promotes the outflow of potassium ions in the repolarization phase of action potential which plays a role in regulating membrane potential of excitable cells. The channel conducts a slowly activating and deactivating current. Current often shows some inward rectification at positive potentials. Channel may be selectively permeable in vitro to other cations besides potassium, in decreasing order of affinity K(+) = Rb(+) &gt; Cs(+) &gt; Na(+). Important for normal physiological function of inner ear such as sensory perception of sound.</text>
</comment>
<comment type="catalytic activity">
    <reaction evidence="2">
        <text>K(+)(in) = K(+)(out)</text>
        <dbReference type="Rhea" id="RHEA:29463"/>
        <dbReference type="ChEBI" id="CHEBI:29103"/>
    </reaction>
</comment>
<comment type="activity regulation">
    <text evidence="2">Two molecules of phosphatidylinositol-4,5-bisphosphate (PIP2-I and PIP2-II) are essential to activate KCNQ4 channel by inducing the coupling of the voltage-sensing domain (VSD) and the pore-forming domain (PD). Upon channel activation, PIP2-I and PIP2-II disrupt the VSD-calmodulin/CALM interaction, causing the release of CALM from the VSD which triggers the opening of the gate. Calcium suppresses KCNQ4 channel current through calcium-bound CALM C-terminus. Therefore CALM acts as calcium sensor that controls channel activity.</text>
</comment>
<comment type="subunit">
    <text evidence="2">Homotetramer. Interacts (via C-terminus) with calmodulin; forms a heterooctameric structure (with 4:4 KCNQ1:CALM stoichiometry); the interaction is calcium-independent, constitutive, participates in the proper assembly of a functional channel. The interaction with calcium-free CALM controls channel trafficking whereas interaction with calcium-bound CALM regulates channel gating. May form a functional heteromultimeric channel with KCNQ3. Interacts with HSP90AB1; promotes cell surface expression of KCNQ4.</text>
</comment>
<comment type="subcellular location">
    <subcellularLocation>
        <location evidence="3">Basal cell membrane</location>
        <topology evidence="2">Multi-pass membrane protein</topology>
    </subcellularLocation>
    <text evidence="3">Situated at the basal membrane of cochlear outer hair cells.</text>
</comment>
<comment type="tissue specificity">
    <text evidence="6">In the inner ear expressed in the outer sensory hair cells of the cochlea and in type I hair cells of the vestibular organs. Also expressed in the postsynaptic membrane of the calyx nerve endings innervating type I cells. In the brain expressed in neurons of many, but not all, nuclei of the central auditory pathway. Absent from most other brain regions.</text>
</comment>
<comment type="domain">
    <text evidence="2">Each channel subunit contains six transmembrane segments (S1-S6) with S1-S4 forming one voltage sensing domain (VSD) and S5-S6 contributing to form one quarter of an interlocking pore-forming domain (PD).</text>
</comment>
<comment type="domain">
    <text evidence="2">The CALM binding domains correspond to the first two membrane-proximal helical regions that interact with a single calmodulin/CALM molecule forming a clamp-like structure. CALM N-terminus binds to the second helix in both calcium-free and calcium-bound forms and regulates channel trafficking. CALM C-terminus binds to the first helice in calcium-free form; this interaction is disrupted by calcium binding which regulates channel electrophysiological activity.</text>
</comment>
<comment type="domain">
    <text evidence="2">The C-terminal assembly domain carries the major determinants of tetramerization and subunit assembly specificity. Its coiled-coil region is four-stranded.</text>
</comment>
<comment type="similarity">
    <text evidence="7">Belongs to the potassium channel family. KQT (TC 1.A.1.15) subfamily. Kv7.4/KCNQ4 sub-subfamily.</text>
</comment>
<protein>
    <recommendedName>
        <fullName>Potassium voltage-gated channel subfamily KQT member 4</fullName>
    </recommendedName>
    <alternativeName>
        <fullName>KQT-like 4</fullName>
    </alternativeName>
    <alternativeName>
        <fullName>Potassium channel subunit alpha KvLQT4</fullName>
    </alternativeName>
    <alternativeName>
        <fullName>Voltage-gated potassium channel subunit Kv7.4</fullName>
    </alternativeName>
</protein>
<name>KCNQ4_MOUSE</name>
<reference key="1">
    <citation type="journal article" date="2009" name="PLoS Biol.">
        <title>Lineage-specific biology revealed by a finished genome assembly of the mouse.</title>
        <authorList>
            <person name="Church D.M."/>
            <person name="Goodstadt L."/>
            <person name="Hillier L.W."/>
            <person name="Zody M.C."/>
            <person name="Goldstein S."/>
            <person name="She X."/>
            <person name="Bult C.J."/>
            <person name="Agarwala R."/>
            <person name="Cherry J.L."/>
            <person name="DiCuccio M."/>
            <person name="Hlavina W."/>
            <person name="Kapustin Y."/>
            <person name="Meric P."/>
            <person name="Maglott D."/>
            <person name="Birtle Z."/>
            <person name="Marques A.C."/>
            <person name="Graves T."/>
            <person name="Zhou S."/>
            <person name="Teague B."/>
            <person name="Potamousis K."/>
            <person name="Churas C."/>
            <person name="Place M."/>
            <person name="Herschleb J."/>
            <person name="Runnheim R."/>
            <person name="Forrest D."/>
            <person name="Amos-Landgraf J."/>
            <person name="Schwartz D.C."/>
            <person name="Cheng Z."/>
            <person name="Lindblad-Toh K."/>
            <person name="Eichler E.E."/>
            <person name="Ponting C.P."/>
        </authorList>
    </citation>
    <scope>NUCLEOTIDE SEQUENCE [LARGE SCALE GENOMIC DNA]</scope>
    <source>
        <strain>C57BL/6J</strain>
    </source>
</reference>
<reference key="2">
    <citation type="journal article" date="2005" name="Science">
        <title>The transcriptional landscape of the mammalian genome.</title>
        <authorList>
            <person name="Carninci P."/>
            <person name="Kasukawa T."/>
            <person name="Katayama S."/>
            <person name="Gough J."/>
            <person name="Frith M.C."/>
            <person name="Maeda N."/>
            <person name="Oyama R."/>
            <person name="Ravasi T."/>
            <person name="Lenhard B."/>
            <person name="Wells C."/>
            <person name="Kodzius R."/>
            <person name="Shimokawa K."/>
            <person name="Bajic V.B."/>
            <person name="Brenner S.E."/>
            <person name="Batalov S."/>
            <person name="Forrest A.R."/>
            <person name="Zavolan M."/>
            <person name="Davis M.J."/>
            <person name="Wilming L.G."/>
            <person name="Aidinis V."/>
            <person name="Allen J.E."/>
            <person name="Ambesi-Impiombato A."/>
            <person name="Apweiler R."/>
            <person name="Aturaliya R.N."/>
            <person name="Bailey T.L."/>
            <person name="Bansal M."/>
            <person name="Baxter L."/>
            <person name="Beisel K.W."/>
            <person name="Bersano T."/>
            <person name="Bono H."/>
            <person name="Chalk A.M."/>
            <person name="Chiu K.P."/>
            <person name="Choudhary V."/>
            <person name="Christoffels A."/>
            <person name="Clutterbuck D.R."/>
            <person name="Crowe M.L."/>
            <person name="Dalla E."/>
            <person name="Dalrymple B.P."/>
            <person name="de Bono B."/>
            <person name="Della Gatta G."/>
            <person name="di Bernardo D."/>
            <person name="Down T."/>
            <person name="Engstrom P."/>
            <person name="Fagiolini M."/>
            <person name="Faulkner G."/>
            <person name="Fletcher C.F."/>
            <person name="Fukushima T."/>
            <person name="Furuno M."/>
            <person name="Futaki S."/>
            <person name="Gariboldi M."/>
            <person name="Georgii-Hemming P."/>
            <person name="Gingeras T.R."/>
            <person name="Gojobori T."/>
            <person name="Green R.E."/>
            <person name="Gustincich S."/>
            <person name="Harbers M."/>
            <person name="Hayashi Y."/>
            <person name="Hensch T.K."/>
            <person name="Hirokawa N."/>
            <person name="Hill D."/>
            <person name="Huminiecki L."/>
            <person name="Iacono M."/>
            <person name="Ikeo K."/>
            <person name="Iwama A."/>
            <person name="Ishikawa T."/>
            <person name="Jakt M."/>
            <person name="Kanapin A."/>
            <person name="Katoh M."/>
            <person name="Kawasawa Y."/>
            <person name="Kelso J."/>
            <person name="Kitamura H."/>
            <person name="Kitano H."/>
            <person name="Kollias G."/>
            <person name="Krishnan S.P."/>
            <person name="Kruger A."/>
            <person name="Kummerfeld S.K."/>
            <person name="Kurochkin I.V."/>
            <person name="Lareau L.F."/>
            <person name="Lazarevic D."/>
            <person name="Lipovich L."/>
            <person name="Liu J."/>
            <person name="Liuni S."/>
            <person name="McWilliam S."/>
            <person name="Madan Babu M."/>
            <person name="Madera M."/>
            <person name="Marchionni L."/>
            <person name="Matsuda H."/>
            <person name="Matsuzawa S."/>
            <person name="Miki H."/>
            <person name="Mignone F."/>
            <person name="Miyake S."/>
            <person name="Morris K."/>
            <person name="Mottagui-Tabar S."/>
            <person name="Mulder N."/>
            <person name="Nakano N."/>
            <person name="Nakauchi H."/>
            <person name="Ng P."/>
            <person name="Nilsson R."/>
            <person name="Nishiguchi S."/>
            <person name="Nishikawa S."/>
            <person name="Nori F."/>
            <person name="Ohara O."/>
            <person name="Okazaki Y."/>
            <person name="Orlando V."/>
            <person name="Pang K.C."/>
            <person name="Pavan W.J."/>
            <person name="Pavesi G."/>
            <person name="Pesole G."/>
            <person name="Petrovsky N."/>
            <person name="Piazza S."/>
            <person name="Reed J."/>
            <person name="Reid J.F."/>
            <person name="Ring B.Z."/>
            <person name="Ringwald M."/>
            <person name="Rost B."/>
            <person name="Ruan Y."/>
            <person name="Salzberg S.L."/>
            <person name="Sandelin A."/>
            <person name="Schneider C."/>
            <person name="Schoenbach C."/>
            <person name="Sekiguchi K."/>
            <person name="Semple C.A."/>
            <person name="Seno S."/>
            <person name="Sessa L."/>
            <person name="Sheng Y."/>
            <person name="Shibata Y."/>
            <person name="Shimada H."/>
            <person name="Shimada K."/>
            <person name="Silva D."/>
            <person name="Sinclair B."/>
            <person name="Sperling S."/>
            <person name="Stupka E."/>
            <person name="Sugiura K."/>
            <person name="Sultana R."/>
            <person name="Takenaka Y."/>
            <person name="Taki K."/>
            <person name="Tammoja K."/>
            <person name="Tan S.L."/>
            <person name="Tang S."/>
            <person name="Taylor M.S."/>
            <person name="Tegner J."/>
            <person name="Teichmann S.A."/>
            <person name="Ueda H.R."/>
            <person name="van Nimwegen E."/>
            <person name="Verardo R."/>
            <person name="Wei C.L."/>
            <person name="Yagi K."/>
            <person name="Yamanishi H."/>
            <person name="Zabarovsky E."/>
            <person name="Zhu S."/>
            <person name="Zimmer A."/>
            <person name="Hide W."/>
            <person name="Bult C."/>
            <person name="Grimmond S.M."/>
            <person name="Teasdale R.D."/>
            <person name="Liu E.T."/>
            <person name="Brusic V."/>
            <person name="Quackenbush J."/>
            <person name="Wahlestedt C."/>
            <person name="Mattick J.S."/>
            <person name="Hume D.A."/>
            <person name="Kai C."/>
            <person name="Sasaki D."/>
            <person name="Tomaru Y."/>
            <person name="Fukuda S."/>
            <person name="Kanamori-Katayama M."/>
            <person name="Suzuki M."/>
            <person name="Aoki J."/>
            <person name="Arakawa T."/>
            <person name="Iida J."/>
            <person name="Imamura K."/>
            <person name="Itoh M."/>
            <person name="Kato T."/>
            <person name="Kawaji H."/>
            <person name="Kawagashira N."/>
            <person name="Kawashima T."/>
            <person name="Kojima M."/>
            <person name="Kondo S."/>
            <person name="Konno H."/>
            <person name="Nakano K."/>
            <person name="Ninomiya N."/>
            <person name="Nishio T."/>
            <person name="Okada M."/>
            <person name="Plessy C."/>
            <person name="Shibata K."/>
            <person name="Shiraki T."/>
            <person name="Suzuki S."/>
            <person name="Tagami M."/>
            <person name="Waki K."/>
            <person name="Watahiki A."/>
            <person name="Okamura-Oho Y."/>
            <person name="Suzuki H."/>
            <person name="Kawai J."/>
            <person name="Hayashizaki Y."/>
        </authorList>
    </citation>
    <scope>NUCLEOTIDE SEQUENCE [LARGE SCALE MRNA] OF 24-546</scope>
    <source>
        <strain>C57BL/6J</strain>
        <tissue>Thymus</tissue>
    </source>
</reference>
<reference key="3">
    <citation type="journal article" date="2000" name="Brain Res. Mol. Brain Res.">
        <title>Longitudinal gradients of KCNQ4 expression in spiral ganglion and cochlear hair cells correlate with progressive hearing loss in DFNA2(1).</title>
        <authorList>
            <person name="Beisel K.W."/>
            <person name="Nelson N.C."/>
            <person name="Delimont D.C."/>
            <person name="Fritzsch B."/>
        </authorList>
    </citation>
    <scope>NUCLEOTIDE SEQUENCE [MRNA] OF 405-680</scope>
    <source>
        <strain>BALB/cJ</strain>
        <tissue>Brain</tissue>
    </source>
</reference>
<reference key="4">
    <citation type="journal article" date="2000" name="Proc. Natl. Acad. Sci. U.S.A.">
        <title>KCNQ4, a K+ channel mutated in a form of dominant deafness, is expressed in the inner ear and the central auditory pathway.</title>
        <authorList>
            <person name="Kharkovets T."/>
            <person name="Hardelin J.-P."/>
            <person name="Safieddine S."/>
            <person name="Schweizer M."/>
            <person name="El-Amraoui A."/>
            <person name="Petit C."/>
            <person name="Jentsch T.J."/>
        </authorList>
    </citation>
    <scope>TISSUE SPECIFICITY</scope>
</reference>
<proteinExistence type="evidence at transcript level"/>
<sequence length="696" mass="77057">MAEAPPRRLGLGPPPGDAPRAELVALTAVQSEQGEAGGGGSPRRLGLLGSPLPPGAPLPGPGSGSGSACGGQRSSAAQKRYRRLQNWVYNVLERPRGWAFVYHVFIFLLVFSCLVLSVLSTIQEHQELANECLLILEFVMIVVFGLEYIIRVWSAGCCCRYRGWQGRFRFARKPFCVIDFIVFVASVAVIAAGTQGNIFATSALRSMRFLQILRMVRMDRRGGTWKLLGSVVYAHSKELITAWYIGFLVLIFASFLVYLAEKDANSDFSSYADSLWWGTITLTTIGYGDKTPHTWLGRVLAAGFALLGISFFALPAGILGSGFALKVQEQHRQKHFEKRRMPAANLIQAAWRLYSTDTSRAYLTATWYYYDSILPSFRELALLFEHIQRARNGGLRPLEVRRAPVPDGAPSRYPPVATCHRPGSASFCPGESSRMGIKDRIRISSSQKRTGPSKQHLAPPPIPTSPSSEQVGEASSPSKVQKSWSFNDRTRFRASLRLKPRCSAEEGPSEEVAEEKSYQCELTVDDVMPAVKTVIRSVRILKFLVAKRKFKETLRPYDVKDVIEQYSAGHLDMLGRIKSLQARVDQIVGRGPGDRKTREKGDKGPSDTEAVDEISMMGRVVKVEKQVQSIEHKLDLLLGFYSRCLRSGTSASLGTVQVPLFDPDITSDYHSPVDHEDISVSAQTLSISRSVSTNMD</sequence>
<keyword id="KW-1003">Cell membrane</keyword>
<keyword id="KW-0175">Coiled coil</keyword>
<keyword id="KW-1009">Hearing</keyword>
<keyword id="KW-0407">Ion channel</keyword>
<keyword id="KW-0406">Ion transport</keyword>
<keyword id="KW-0472">Membrane</keyword>
<keyword id="KW-0630">Potassium</keyword>
<keyword id="KW-0631">Potassium channel</keyword>
<keyword id="KW-0633">Potassium transport</keyword>
<keyword id="KW-1185">Reference proteome</keyword>
<keyword id="KW-0812">Transmembrane</keyword>
<keyword id="KW-1133">Transmembrane helix</keyword>
<keyword id="KW-0813">Transport</keyword>
<keyword id="KW-0851">Voltage-gated channel</keyword>
<accession>Q9JK97</accession>
<accession>A2A7E8</accession>
<accession>Q8C9Y6</accession>
<feature type="chain" id="PRO_0000054038" description="Potassium voltage-gated channel subfamily KQT member 4">
    <location>
        <begin position="1"/>
        <end position="696"/>
    </location>
</feature>
<feature type="topological domain" description="Cytoplasmic" evidence="7">
    <location>
        <begin position="1"/>
        <end position="97"/>
    </location>
</feature>
<feature type="transmembrane region" description="Helical; Name=Segment S1" evidence="2">
    <location>
        <begin position="98"/>
        <end position="119"/>
    </location>
</feature>
<feature type="topological domain" description="Extracellular" evidence="7">
    <location>
        <begin position="120"/>
        <end position="130"/>
    </location>
</feature>
<feature type="transmembrane region" description="Helical; Name=Segment S2" evidence="2">
    <location>
        <begin position="131"/>
        <end position="153"/>
    </location>
</feature>
<feature type="topological domain" description="Cytoplasmic" evidence="7">
    <location>
        <begin position="154"/>
        <end position="169"/>
    </location>
</feature>
<feature type="transmembrane region" description="Helical; Name=Segment S3" evidence="2">
    <location>
        <begin position="170"/>
        <end position="192"/>
    </location>
</feature>
<feature type="topological domain" description="Extracellular" evidence="7">
    <location>
        <begin position="193"/>
        <end position="203"/>
    </location>
</feature>
<feature type="transmembrane region" description="Helical; Voltage-sensor; Name=Segment S4" evidence="2">
    <location>
        <begin position="204"/>
        <end position="224"/>
    </location>
</feature>
<feature type="topological domain" description="Cytoplasmic" evidence="7">
    <location>
        <begin position="225"/>
        <end position="236"/>
    </location>
</feature>
<feature type="transmembrane region" description="Helical; Name=Segment S5" evidence="2">
    <location>
        <begin position="237"/>
        <end position="259"/>
    </location>
</feature>
<feature type="topological domain" description="Extracellular" evidence="7">
    <location>
        <begin position="260"/>
        <end position="271"/>
    </location>
</feature>
<feature type="intramembrane region" description="Pore-forming; Name=Segment H5" evidence="4">
    <location>
        <begin position="272"/>
        <end position="293"/>
    </location>
</feature>
<feature type="topological domain" description="Extracellular" evidence="7">
    <location>
        <position position="294"/>
    </location>
</feature>
<feature type="transmembrane region" description="Helical; Name=Segment S6" evidence="2">
    <location>
        <begin position="295"/>
        <end position="323"/>
    </location>
</feature>
<feature type="topological domain" description="Cytoplasmic" evidence="7">
    <location>
        <begin position="324"/>
        <end position="696"/>
    </location>
</feature>
<feature type="region of interest" description="Disordered" evidence="5">
    <location>
        <begin position="1"/>
        <end position="20"/>
    </location>
</feature>
<feature type="region of interest" description="Interaction with CALM" evidence="2">
    <location>
        <begin position="343"/>
        <end position="352"/>
    </location>
</feature>
<feature type="region of interest" description="Disordered" evidence="5">
    <location>
        <begin position="445"/>
        <end position="484"/>
    </location>
</feature>
<feature type="region of interest" description="Interaction with CALM" evidence="1">
    <location>
        <begin position="536"/>
        <end position="550"/>
    </location>
</feature>
<feature type="region of interest" description="C-terminal assembly domain (tetramerization)" evidence="2">
    <location>
        <begin position="547"/>
        <end position="651"/>
    </location>
</feature>
<feature type="region of interest" description="Disordered" evidence="5">
    <location>
        <begin position="589"/>
        <end position="609"/>
    </location>
</feature>
<feature type="coiled-coil region">
    <location>
        <begin position="610"/>
        <end position="645"/>
    </location>
</feature>
<feature type="compositionally biased region" description="Polar residues" evidence="5">
    <location>
        <begin position="465"/>
        <end position="484"/>
    </location>
</feature>
<feature type="compositionally biased region" description="Basic and acidic residues" evidence="5">
    <location>
        <begin position="592"/>
        <end position="606"/>
    </location>
</feature>
<feature type="binding site" evidence="2">
    <location>
        <position position="94"/>
    </location>
    <ligand>
        <name>a 1,2-diacyl-sn-glycero-3-phospho-(1D-myo-inositol-4,5-bisphosphate)</name>
        <dbReference type="ChEBI" id="CHEBI:58456"/>
        <label>1</label>
    </ligand>
</feature>
<feature type="binding site" evidence="2">
    <location>
        <position position="173"/>
    </location>
    <ligand>
        <name>a 1,2-diacyl-sn-glycero-3-phospho-(1D-myo-inositol-4,5-bisphosphate)</name>
        <dbReference type="ChEBI" id="CHEBI:58456"/>
        <label>1</label>
    </ligand>
</feature>
<feature type="binding site" evidence="2">
    <location>
        <position position="220"/>
    </location>
    <ligand>
        <name>a 1,2-diacyl-sn-glycero-3-phospho-(1D-myo-inositol-4,5-bisphosphate)</name>
        <dbReference type="ChEBI" id="CHEBI:58456"/>
        <label>1</label>
    </ligand>
</feature>
<feature type="binding site" evidence="2">
    <location>
        <position position="221"/>
    </location>
    <ligand>
        <name>a 1,2-diacyl-sn-glycero-3-phospho-(1D-myo-inositol-4,5-bisphosphate)</name>
        <dbReference type="ChEBI" id="CHEBI:58456"/>
        <label>1</label>
    </ligand>
</feature>
<feature type="binding site" description="in chain A" evidence="2">
    <location>
        <position position="221"/>
    </location>
    <ligand>
        <name>a 1,2-diacyl-sn-glycero-3-phospho-(1D-myo-inositol-4,5-bisphosphate)</name>
        <dbReference type="ChEBI" id="CHEBI:58456"/>
        <label>2</label>
        <note>ligand shared between two neighboring KCNQ4 subunits</note>
    </ligand>
</feature>
<feature type="binding site" evidence="2">
    <location>
        <position position="226"/>
    </location>
    <ligand>
        <name>a 1,2-diacyl-sn-glycero-3-phospho-(1D-myo-inositol-4,5-bisphosphate)</name>
        <dbReference type="ChEBI" id="CHEBI:58456"/>
        <label>1</label>
    </ligand>
</feature>
<feature type="binding site" description="in chain B" evidence="2">
    <location>
        <position position="236"/>
    </location>
    <ligand>
        <name>a 1,2-diacyl-sn-glycero-3-phospho-(1D-myo-inositol-4,5-bisphosphate)</name>
        <dbReference type="ChEBI" id="CHEBI:58456"/>
        <label>2</label>
        <note>ligand shared between two neighboring KCNQ4 subunits</note>
    </ligand>
</feature>
<feature type="binding site" description="in chain A" evidence="2">
    <location>
        <position position="331"/>
    </location>
    <ligand>
        <name>a 1,2-diacyl-sn-glycero-3-phospho-(1D-myo-inositol-4,5-bisphosphate)</name>
        <dbReference type="ChEBI" id="CHEBI:58456"/>
        <label>2</label>
        <note>ligand shared between two neighboring KCNQ4 subunits</note>
    </ligand>
</feature>
<feature type="binding site" description="in chain A" evidence="2">
    <location>
        <position position="334"/>
    </location>
    <ligand>
        <name>a 1,2-diacyl-sn-glycero-3-phospho-(1D-myo-inositol-4,5-bisphosphate)</name>
        <dbReference type="ChEBI" id="CHEBI:58456"/>
        <label>2</label>
        <note>ligand shared between two neighboring KCNQ4 subunits</note>
    </ligand>
</feature>
<feature type="sequence conflict" description="In Ref. 3; AAF66432." evidence="7" ref="3">
    <original>S</original>
    <variation>I</variation>
    <location>
        <position position="445"/>
    </location>
</feature>
<feature type="sequence conflict" description="In Ref. 3; AAF66432." evidence="7" ref="3">
    <original>C</original>
    <variation>S</variation>
    <location>
        <position position="502"/>
    </location>
</feature>
<feature type="sequence conflict" description="In Ref. 2; BAC30534." evidence="7" ref="2">
    <original>T</original>
    <variation>S</variation>
    <location>
        <position position="533"/>
    </location>
</feature>
<feature type="sequence conflict" description="In Ref. 3; AAF66432." evidence="7" ref="3">
    <original>T</original>
    <variation>A</variation>
    <location>
        <position position="608"/>
    </location>
</feature>
<evidence type="ECO:0000250" key="1">
    <source>
        <dbReference type="UniProtKB" id="P51787"/>
    </source>
</evidence>
<evidence type="ECO:0000250" key="2">
    <source>
        <dbReference type="UniProtKB" id="P56696"/>
    </source>
</evidence>
<evidence type="ECO:0000250" key="3">
    <source>
        <dbReference type="UniProtKB" id="Q9JK96"/>
    </source>
</evidence>
<evidence type="ECO:0000255" key="4"/>
<evidence type="ECO:0000256" key="5">
    <source>
        <dbReference type="SAM" id="MobiDB-lite"/>
    </source>
</evidence>
<evidence type="ECO:0000269" key="6">
    <source>
    </source>
</evidence>
<evidence type="ECO:0000305" key="7"/>
<evidence type="ECO:0000312" key="8">
    <source>
        <dbReference type="MGI" id="MGI:1926803"/>
    </source>
</evidence>
<organism>
    <name type="scientific">Mus musculus</name>
    <name type="common">Mouse</name>
    <dbReference type="NCBI Taxonomy" id="10090"/>
    <lineage>
        <taxon>Eukaryota</taxon>
        <taxon>Metazoa</taxon>
        <taxon>Chordata</taxon>
        <taxon>Craniata</taxon>
        <taxon>Vertebrata</taxon>
        <taxon>Euteleostomi</taxon>
        <taxon>Mammalia</taxon>
        <taxon>Eutheria</taxon>
        <taxon>Euarchontoglires</taxon>
        <taxon>Glires</taxon>
        <taxon>Rodentia</taxon>
        <taxon>Myomorpha</taxon>
        <taxon>Muroidea</taxon>
        <taxon>Muridae</taxon>
        <taxon>Murinae</taxon>
        <taxon>Mus</taxon>
        <taxon>Mus</taxon>
    </lineage>
</organism>
<dbReference type="EMBL" id="AL606924">
    <property type="status" value="NOT_ANNOTATED_CDS"/>
    <property type="molecule type" value="Genomic_DNA"/>
</dbReference>
<dbReference type="EMBL" id="AK040190">
    <property type="protein sequence ID" value="BAC30534.1"/>
    <property type="molecule type" value="mRNA"/>
</dbReference>
<dbReference type="EMBL" id="AF249747">
    <property type="protein sequence ID" value="AAF66432.1"/>
    <property type="molecule type" value="mRNA"/>
</dbReference>
<dbReference type="CCDS" id="CCDS38865.1"/>
<dbReference type="RefSeq" id="NP_001074611.1">
    <property type="nucleotide sequence ID" value="NM_001081142.3"/>
</dbReference>
<dbReference type="SMR" id="Q9JK97"/>
<dbReference type="BioGRID" id="208641">
    <property type="interactions" value="2"/>
</dbReference>
<dbReference type="FunCoup" id="Q9JK97">
    <property type="interactions" value="142"/>
</dbReference>
<dbReference type="STRING" id="10090.ENSMUSP00000030376"/>
<dbReference type="iPTMnet" id="Q9JK97"/>
<dbReference type="PhosphoSitePlus" id="Q9JK97"/>
<dbReference type="PaxDb" id="10090-ENSMUSP00000030376"/>
<dbReference type="ProteomicsDB" id="263503"/>
<dbReference type="ABCD" id="Q9JK97">
    <property type="antibodies" value="1 sequenced antibody"/>
</dbReference>
<dbReference type="Antibodypedia" id="18036">
    <property type="antibodies" value="355 antibodies from 37 providers"/>
</dbReference>
<dbReference type="DNASU" id="60613"/>
<dbReference type="Ensembl" id="ENSMUST00000030376.8">
    <property type="protein sequence ID" value="ENSMUSP00000030376.8"/>
    <property type="gene ID" value="ENSMUSG00000028631.8"/>
</dbReference>
<dbReference type="GeneID" id="60613"/>
<dbReference type="KEGG" id="mmu:60613"/>
<dbReference type="UCSC" id="uc008unm.1">
    <property type="organism name" value="mouse"/>
</dbReference>
<dbReference type="AGR" id="MGI:1926803"/>
<dbReference type="CTD" id="9132"/>
<dbReference type="MGI" id="MGI:1926803">
    <property type="gene designation" value="Kcnq4"/>
</dbReference>
<dbReference type="VEuPathDB" id="HostDB:ENSMUSG00000028631"/>
<dbReference type="eggNOG" id="KOG1419">
    <property type="taxonomic scope" value="Eukaryota"/>
</dbReference>
<dbReference type="GeneTree" id="ENSGT00940000159209"/>
<dbReference type="HOGENOM" id="CLU_011722_8_3_1"/>
<dbReference type="InParanoid" id="Q9JK97"/>
<dbReference type="OMA" id="YATCLHM"/>
<dbReference type="OrthoDB" id="8879391at2759"/>
<dbReference type="PhylomeDB" id="Q9JK97"/>
<dbReference type="TreeFam" id="TF315186"/>
<dbReference type="Reactome" id="R-MMU-1296072">
    <property type="pathway name" value="Voltage gated Potassium channels"/>
</dbReference>
<dbReference type="BioGRID-ORCS" id="60613">
    <property type="hits" value="4 hits in 79 CRISPR screens"/>
</dbReference>
<dbReference type="PRO" id="PR:Q9JK97"/>
<dbReference type="Proteomes" id="UP000000589">
    <property type="component" value="Chromosome 4"/>
</dbReference>
<dbReference type="RNAct" id="Q9JK97">
    <property type="molecule type" value="protein"/>
</dbReference>
<dbReference type="Bgee" id="ENSMUSG00000028631">
    <property type="expression patterns" value="Expressed in digastric muscle group and 78 other cell types or tissues"/>
</dbReference>
<dbReference type="GO" id="GO:0009925">
    <property type="term" value="C:basal plasma membrane"/>
    <property type="evidence" value="ECO:0007669"/>
    <property type="project" value="UniProtKB-SubCell"/>
</dbReference>
<dbReference type="GO" id="GO:0016020">
    <property type="term" value="C:membrane"/>
    <property type="evidence" value="ECO:0000305"/>
    <property type="project" value="MGI"/>
</dbReference>
<dbReference type="GO" id="GO:0034702">
    <property type="term" value="C:monoatomic ion channel complex"/>
    <property type="evidence" value="ECO:0007669"/>
    <property type="project" value="UniProtKB-KW"/>
</dbReference>
<dbReference type="GO" id="GO:0005886">
    <property type="term" value="C:plasma membrane"/>
    <property type="evidence" value="ECO:0000304"/>
    <property type="project" value="Reactome"/>
</dbReference>
<dbReference type="GO" id="GO:0005249">
    <property type="term" value="F:voltage-gated potassium channel activity"/>
    <property type="evidence" value="ECO:0000315"/>
    <property type="project" value="MGI"/>
</dbReference>
<dbReference type="GO" id="GO:0042472">
    <property type="term" value="P:inner ear morphogenesis"/>
    <property type="evidence" value="ECO:0000315"/>
    <property type="project" value="MGI"/>
</dbReference>
<dbReference type="GO" id="GO:0006813">
    <property type="term" value="P:potassium ion transport"/>
    <property type="evidence" value="ECO:0000315"/>
    <property type="project" value="MGI"/>
</dbReference>
<dbReference type="GO" id="GO:0007605">
    <property type="term" value="P:sensory perception of sound"/>
    <property type="evidence" value="ECO:0000315"/>
    <property type="project" value="MGI"/>
</dbReference>
<dbReference type="FunFam" id="1.20.120.350:FF:000017">
    <property type="entry name" value="potassium voltage-gated channel subfamily KQT member 1"/>
    <property type="match status" value="1"/>
</dbReference>
<dbReference type="FunFam" id="1.10.287.70:FF:000016">
    <property type="entry name" value="Putative potassium voltage-gated channel subfamily KQT member 2"/>
    <property type="match status" value="1"/>
</dbReference>
<dbReference type="Gene3D" id="1.10.287.70">
    <property type="match status" value="1"/>
</dbReference>
<dbReference type="Gene3D" id="6.10.140.1910">
    <property type="match status" value="2"/>
</dbReference>
<dbReference type="InterPro" id="IPR005821">
    <property type="entry name" value="Ion_trans_dom"/>
</dbReference>
<dbReference type="InterPro" id="IPR003937">
    <property type="entry name" value="K_chnl_volt-dep_KCNQ"/>
</dbReference>
<dbReference type="InterPro" id="IPR013821">
    <property type="entry name" value="K_chnl_volt-dep_KCNQ_C"/>
</dbReference>
<dbReference type="PANTHER" id="PTHR47735">
    <property type="entry name" value="POTASSIUM VOLTAGE-GATED CHANNEL SUBFAMILY KQT MEMBER 4"/>
    <property type="match status" value="1"/>
</dbReference>
<dbReference type="PANTHER" id="PTHR47735:SF7">
    <property type="entry name" value="POTASSIUM VOLTAGE-GATED CHANNEL SUBFAMILY KQT MEMBER 4"/>
    <property type="match status" value="1"/>
</dbReference>
<dbReference type="Pfam" id="PF00520">
    <property type="entry name" value="Ion_trans"/>
    <property type="match status" value="1"/>
</dbReference>
<dbReference type="Pfam" id="PF03520">
    <property type="entry name" value="KCNQ_channel"/>
    <property type="match status" value="1"/>
</dbReference>
<dbReference type="PRINTS" id="PR00169">
    <property type="entry name" value="KCHANNEL"/>
</dbReference>
<dbReference type="PRINTS" id="PR01459">
    <property type="entry name" value="KCNQCHANNEL"/>
</dbReference>
<dbReference type="SUPFAM" id="SSF81324">
    <property type="entry name" value="Voltage-gated potassium channels"/>
    <property type="match status" value="1"/>
</dbReference>
<gene>
    <name evidence="8" type="primary">Kcnq4</name>
</gene>